<comment type="function">
    <text evidence="1">Catalyzes reversively the conversion of L-aspartate beta-semialdehyde (ASA) to L-2,4-diaminobutyrate (DABA) by transamination with L-glutamate.</text>
</comment>
<comment type="catalytic activity">
    <reaction>
        <text>L-2,4-diaminobutanoate + 2-oxoglutarate = L-aspartate 4-semialdehyde + L-glutamate</text>
        <dbReference type="Rhea" id="RHEA:11160"/>
        <dbReference type="ChEBI" id="CHEBI:16810"/>
        <dbReference type="ChEBI" id="CHEBI:29985"/>
        <dbReference type="ChEBI" id="CHEBI:58761"/>
        <dbReference type="ChEBI" id="CHEBI:537519"/>
        <dbReference type="EC" id="2.6.1.76"/>
    </reaction>
</comment>
<comment type="cofactor">
    <cofactor evidence="1">
        <name>pyridoxal 5'-phosphate</name>
        <dbReference type="ChEBI" id="CHEBI:597326"/>
    </cofactor>
</comment>
<comment type="pathway">
    <text>Amine and polyamine biosynthesis; ectoine biosynthesis; L-ectoine from L-aspartate 4-semialdehyde: step 1/3.</text>
</comment>
<comment type="similarity">
    <text evidence="3">Belongs to the class-III pyridoxal-phosphate-dependent aminotransferase family.</text>
</comment>
<keyword id="KW-0032">Aminotransferase</keyword>
<keyword id="KW-0663">Pyridoxal phosphate</keyword>
<keyword id="KW-0808">Transferase</keyword>
<gene>
    <name type="primary">ectB</name>
    <name type="ordered locus">BB3219</name>
</gene>
<organism>
    <name type="scientific">Bordetella bronchiseptica (strain ATCC BAA-588 / NCTC 13252 / RB50)</name>
    <name type="common">Alcaligenes bronchisepticus</name>
    <dbReference type="NCBI Taxonomy" id="257310"/>
    <lineage>
        <taxon>Bacteria</taxon>
        <taxon>Pseudomonadati</taxon>
        <taxon>Pseudomonadota</taxon>
        <taxon>Betaproteobacteria</taxon>
        <taxon>Burkholderiales</taxon>
        <taxon>Alcaligenaceae</taxon>
        <taxon>Bordetella</taxon>
    </lineage>
</organism>
<evidence type="ECO:0000250" key="1"/>
<evidence type="ECO:0000255" key="2"/>
<evidence type="ECO:0000305" key="3"/>
<feature type="chain" id="PRO_0000120520" description="Diaminobutyrate--2-oxoglutarate transaminase">
    <location>
        <begin position="1"/>
        <end position="435"/>
    </location>
</feature>
<feature type="modified residue" description="N6-(pyridoxal phosphate)lysine" evidence="2">
    <location>
        <position position="266"/>
    </location>
</feature>
<reference key="1">
    <citation type="journal article" date="2003" name="Nat. Genet.">
        <title>Comparative analysis of the genome sequences of Bordetella pertussis, Bordetella parapertussis and Bordetella bronchiseptica.</title>
        <authorList>
            <person name="Parkhill J."/>
            <person name="Sebaihia M."/>
            <person name="Preston A."/>
            <person name="Murphy L.D."/>
            <person name="Thomson N.R."/>
            <person name="Harris D.E."/>
            <person name="Holden M.T.G."/>
            <person name="Churcher C.M."/>
            <person name="Bentley S.D."/>
            <person name="Mungall K.L."/>
            <person name="Cerdeno-Tarraga A.-M."/>
            <person name="Temple L."/>
            <person name="James K.D."/>
            <person name="Harris B."/>
            <person name="Quail M.A."/>
            <person name="Achtman M."/>
            <person name="Atkin R."/>
            <person name="Baker S."/>
            <person name="Basham D."/>
            <person name="Bason N."/>
            <person name="Cherevach I."/>
            <person name="Chillingworth T."/>
            <person name="Collins M."/>
            <person name="Cronin A."/>
            <person name="Davis P."/>
            <person name="Doggett J."/>
            <person name="Feltwell T."/>
            <person name="Goble A."/>
            <person name="Hamlin N."/>
            <person name="Hauser H."/>
            <person name="Holroyd S."/>
            <person name="Jagels K."/>
            <person name="Leather S."/>
            <person name="Moule S."/>
            <person name="Norberczak H."/>
            <person name="O'Neil S."/>
            <person name="Ormond D."/>
            <person name="Price C."/>
            <person name="Rabbinowitsch E."/>
            <person name="Rutter S."/>
            <person name="Sanders M."/>
            <person name="Saunders D."/>
            <person name="Seeger K."/>
            <person name="Sharp S."/>
            <person name="Simmonds M."/>
            <person name="Skelton J."/>
            <person name="Squares R."/>
            <person name="Squares S."/>
            <person name="Stevens K."/>
            <person name="Unwin L."/>
            <person name="Whitehead S."/>
            <person name="Barrell B.G."/>
            <person name="Maskell D.J."/>
        </authorList>
    </citation>
    <scope>NUCLEOTIDE SEQUENCE [LARGE SCALE GENOMIC DNA]</scope>
    <source>
        <strain>ATCC BAA-588 / NCTC 13252 / RB50</strain>
    </source>
</reference>
<sequence length="435" mass="47707">MDLKIFDRMESEVRGYIRSFPVIFSQARGSLLIDEEGNEYIDFFSGAGTLNYGHNNPVFKERLLEYLHSDGVVHGLDMATSAKKRFLETVDRVLLKPRNWQYTLQFTGPTGTNAVEAALKLARQVKGRSNIISFTHGFHGVSGGSLAATANAKFRDAAGVSLGNTTFMPYDGYFGPDVDTIAYIERMLDDPSSGLDKPAAVIVETVQGEGGVNVATLRWLKDLQKLCRRHDMLMIVDDIQVGCGRTGSFFSFEAAGIQPDIITLSKSLSGFGLPMSLVLMKPELDVWKPGAHSGTFRGNNLAFVTATQALETYWSSDAFSNEVQRKERLVRDWLENLAHSYPNAGLAVRGRGLIQGLVATAEPELANRIARKAFERGVVIETSGAQDEVLKLLPALTIEDELLTRGLDLIEASVADALSEEQPAAQVLKFGGKRR</sequence>
<accession>Q7WHI8</accession>
<proteinExistence type="inferred from homology"/>
<dbReference type="EC" id="2.6.1.76"/>
<dbReference type="EMBL" id="BX640446">
    <property type="protein sequence ID" value="CAE33711.1"/>
    <property type="molecule type" value="Genomic_DNA"/>
</dbReference>
<dbReference type="RefSeq" id="WP_003810599.1">
    <property type="nucleotide sequence ID" value="NC_002927.3"/>
</dbReference>
<dbReference type="SMR" id="Q7WHI8"/>
<dbReference type="GeneID" id="93203658"/>
<dbReference type="KEGG" id="bbr:BB3219"/>
<dbReference type="eggNOG" id="COG0160">
    <property type="taxonomic scope" value="Bacteria"/>
</dbReference>
<dbReference type="HOGENOM" id="CLU_016922_10_0_4"/>
<dbReference type="UniPathway" id="UPA00067">
    <property type="reaction ID" value="UER00121"/>
</dbReference>
<dbReference type="Proteomes" id="UP000001027">
    <property type="component" value="Chromosome"/>
</dbReference>
<dbReference type="GO" id="GO:0045303">
    <property type="term" value="F:diaminobutyrate-2-oxoglutarate transaminase activity"/>
    <property type="evidence" value="ECO:0007669"/>
    <property type="project" value="UniProtKB-EC"/>
</dbReference>
<dbReference type="GO" id="GO:0047307">
    <property type="term" value="F:diaminobutyrate-pyruvate transaminase activity"/>
    <property type="evidence" value="ECO:0007669"/>
    <property type="project" value="InterPro"/>
</dbReference>
<dbReference type="GO" id="GO:0030170">
    <property type="term" value="F:pyridoxal phosphate binding"/>
    <property type="evidence" value="ECO:0007669"/>
    <property type="project" value="InterPro"/>
</dbReference>
<dbReference type="GO" id="GO:0019491">
    <property type="term" value="P:ectoine biosynthetic process"/>
    <property type="evidence" value="ECO:0007669"/>
    <property type="project" value="UniProtKB-UniPathway"/>
</dbReference>
<dbReference type="CDD" id="cd00610">
    <property type="entry name" value="OAT_like"/>
    <property type="match status" value="1"/>
</dbReference>
<dbReference type="FunFam" id="3.40.640.10:FF:000004">
    <property type="entry name" value="Acetylornithine aminotransferase"/>
    <property type="match status" value="1"/>
</dbReference>
<dbReference type="Gene3D" id="3.90.1150.10">
    <property type="entry name" value="Aspartate Aminotransferase, domain 1"/>
    <property type="match status" value="1"/>
</dbReference>
<dbReference type="Gene3D" id="3.40.640.10">
    <property type="entry name" value="Type I PLP-dependent aspartate aminotransferase-like (Major domain)"/>
    <property type="match status" value="1"/>
</dbReference>
<dbReference type="InterPro" id="IPR005814">
    <property type="entry name" value="Aminotrans_3"/>
</dbReference>
<dbReference type="InterPro" id="IPR049704">
    <property type="entry name" value="Aminotrans_3_PPA_site"/>
</dbReference>
<dbReference type="InterPro" id="IPR004637">
    <property type="entry name" value="Dat"/>
</dbReference>
<dbReference type="InterPro" id="IPR012773">
    <property type="entry name" value="Ectoine_EctB"/>
</dbReference>
<dbReference type="InterPro" id="IPR015424">
    <property type="entry name" value="PyrdxlP-dep_Trfase"/>
</dbReference>
<dbReference type="InterPro" id="IPR015421">
    <property type="entry name" value="PyrdxlP-dep_Trfase_major"/>
</dbReference>
<dbReference type="InterPro" id="IPR015422">
    <property type="entry name" value="PyrdxlP-dep_Trfase_small"/>
</dbReference>
<dbReference type="NCBIfam" id="TIGR00709">
    <property type="entry name" value="dat"/>
    <property type="match status" value="1"/>
</dbReference>
<dbReference type="NCBIfam" id="TIGR02407">
    <property type="entry name" value="ectoine_ectB"/>
    <property type="match status" value="1"/>
</dbReference>
<dbReference type="NCBIfam" id="NF006733">
    <property type="entry name" value="PRK09264.1"/>
    <property type="match status" value="1"/>
</dbReference>
<dbReference type="PANTHER" id="PTHR43552">
    <property type="entry name" value="DIAMINOBUTYRATE--2-OXOGLUTARATE AMINOTRANSFERASE"/>
    <property type="match status" value="1"/>
</dbReference>
<dbReference type="PANTHER" id="PTHR43552:SF2">
    <property type="entry name" value="DIAMINOBUTYRATE--2-OXOGLUTARATE TRANSAMINASE"/>
    <property type="match status" value="1"/>
</dbReference>
<dbReference type="Pfam" id="PF00202">
    <property type="entry name" value="Aminotran_3"/>
    <property type="match status" value="1"/>
</dbReference>
<dbReference type="PIRSF" id="PIRSF000521">
    <property type="entry name" value="Transaminase_4ab_Lys_Orn"/>
    <property type="match status" value="1"/>
</dbReference>
<dbReference type="SUPFAM" id="SSF53383">
    <property type="entry name" value="PLP-dependent transferases"/>
    <property type="match status" value="1"/>
</dbReference>
<dbReference type="PROSITE" id="PS00600">
    <property type="entry name" value="AA_TRANSFER_CLASS_3"/>
    <property type="match status" value="1"/>
</dbReference>
<protein>
    <recommendedName>
        <fullName>Diaminobutyrate--2-oxoglutarate transaminase</fullName>
        <ecNumber>2.6.1.76</ecNumber>
    </recommendedName>
    <alternativeName>
        <fullName>DABA aminotransferase</fullName>
    </alternativeName>
    <alternativeName>
        <fullName>Diaminobutyrate--2-oxoglutarate aminotransferase</fullName>
    </alternativeName>
    <alternativeName>
        <fullName>L-2,4-diaminobutyric acid transaminase</fullName>
    </alternativeName>
</protein>
<name>ECTB_BORBR</name>